<evidence type="ECO:0000255" key="1">
    <source>
        <dbReference type="HAMAP-Rule" id="MF_00294"/>
    </source>
</evidence>
<protein>
    <recommendedName>
        <fullName evidence="1">Large ribosomal subunit protein bL33C</fullName>
    </recommendedName>
    <alternativeName>
        <fullName evidence="1">50S ribosomal protein L33 3</fullName>
    </alternativeName>
</protein>
<feature type="chain" id="PRO_0000356719" description="Large ribosomal subunit protein bL33C">
    <location>
        <begin position="1"/>
        <end position="49"/>
    </location>
</feature>
<name>RL333_STRPB</name>
<sequence>MRVNITLEHKESGERLYLTSKNKRNTPDRLQLKKYSPKLRKHVVFTEVK</sequence>
<accession>Q1J9B1</accession>
<proteinExistence type="inferred from homology"/>
<organism>
    <name type="scientific">Streptococcus pyogenes serotype M12 (strain MGAS2096)</name>
    <dbReference type="NCBI Taxonomy" id="370553"/>
    <lineage>
        <taxon>Bacteria</taxon>
        <taxon>Bacillati</taxon>
        <taxon>Bacillota</taxon>
        <taxon>Bacilli</taxon>
        <taxon>Lactobacillales</taxon>
        <taxon>Streptococcaceae</taxon>
        <taxon>Streptococcus</taxon>
    </lineage>
</organism>
<gene>
    <name evidence="1" type="primary">rpmG3</name>
    <name type="ordered locus">MGAS2096_Spy1848</name>
</gene>
<comment type="similarity">
    <text evidence="1">Belongs to the bacterial ribosomal protein bL33 family.</text>
</comment>
<reference key="1">
    <citation type="journal article" date="2006" name="Proc. Natl. Acad. Sci. U.S.A.">
        <title>Molecular genetic anatomy of inter- and intraserotype variation in the human bacterial pathogen group A Streptococcus.</title>
        <authorList>
            <person name="Beres S.B."/>
            <person name="Richter E.W."/>
            <person name="Nagiec M.J."/>
            <person name="Sumby P."/>
            <person name="Porcella S.F."/>
            <person name="DeLeo F.R."/>
            <person name="Musser J.M."/>
        </authorList>
    </citation>
    <scope>NUCLEOTIDE SEQUENCE [LARGE SCALE GENOMIC DNA]</scope>
    <source>
        <strain>MGAS2096</strain>
    </source>
</reference>
<keyword id="KW-0687">Ribonucleoprotein</keyword>
<keyword id="KW-0689">Ribosomal protein</keyword>
<dbReference type="EMBL" id="CP000261">
    <property type="protein sequence ID" value="ABF36900.1"/>
    <property type="molecule type" value="Genomic_DNA"/>
</dbReference>
<dbReference type="SMR" id="Q1J9B1"/>
<dbReference type="KEGG" id="spj:MGAS2096_Spy1848"/>
<dbReference type="HOGENOM" id="CLU_190949_3_2_9"/>
<dbReference type="GO" id="GO:0005737">
    <property type="term" value="C:cytoplasm"/>
    <property type="evidence" value="ECO:0007669"/>
    <property type="project" value="UniProtKB-ARBA"/>
</dbReference>
<dbReference type="GO" id="GO:1990904">
    <property type="term" value="C:ribonucleoprotein complex"/>
    <property type="evidence" value="ECO:0007669"/>
    <property type="project" value="UniProtKB-KW"/>
</dbReference>
<dbReference type="GO" id="GO:0005840">
    <property type="term" value="C:ribosome"/>
    <property type="evidence" value="ECO:0007669"/>
    <property type="project" value="UniProtKB-KW"/>
</dbReference>
<dbReference type="GO" id="GO:0003735">
    <property type="term" value="F:structural constituent of ribosome"/>
    <property type="evidence" value="ECO:0007669"/>
    <property type="project" value="InterPro"/>
</dbReference>
<dbReference type="GO" id="GO:0006412">
    <property type="term" value="P:translation"/>
    <property type="evidence" value="ECO:0007669"/>
    <property type="project" value="UniProtKB-UniRule"/>
</dbReference>
<dbReference type="Gene3D" id="2.20.28.120">
    <property type="entry name" value="Ribosomal protein L33"/>
    <property type="match status" value="1"/>
</dbReference>
<dbReference type="HAMAP" id="MF_00294">
    <property type="entry name" value="Ribosomal_bL33"/>
    <property type="match status" value="1"/>
</dbReference>
<dbReference type="InterPro" id="IPR001705">
    <property type="entry name" value="Ribosomal_bL33"/>
</dbReference>
<dbReference type="InterPro" id="IPR018264">
    <property type="entry name" value="Ribosomal_bL33_CS"/>
</dbReference>
<dbReference type="InterPro" id="IPR038584">
    <property type="entry name" value="Ribosomal_bL33_sf"/>
</dbReference>
<dbReference type="InterPro" id="IPR011332">
    <property type="entry name" value="Ribosomal_zn-bd"/>
</dbReference>
<dbReference type="NCBIfam" id="NF001764">
    <property type="entry name" value="PRK00504.1"/>
    <property type="match status" value="1"/>
</dbReference>
<dbReference type="NCBIfam" id="NF001860">
    <property type="entry name" value="PRK00595.1"/>
    <property type="match status" value="1"/>
</dbReference>
<dbReference type="NCBIfam" id="TIGR01023">
    <property type="entry name" value="rpmG_bact"/>
    <property type="match status" value="1"/>
</dbReference>
<dbReference type="PANTHER" id="PTHR43168">
    <property type="entry name" value="50S RIBOSOMAL PROTEIN L33, CHLOROPLASTIC"/>
    <property type="match status" value="1"/>
</dbReference>
<dbReference type="PANTHER" id="PTHR43168:SF2">
    <property type="entry name" value="LARGE RIBOSOMAL SUBUNIT PROTEIN BL33C"/>
    <property type="match status" value="1"/>
</dbReference>
<dbReference type="Pfam" id="PF00471">
    <property type="entry name" value="Ribosomal_L33"/>
    <property type="match status" value="1"/>
</dbReference>
<dbReference type="SUPFAM" id="SSF57829">
    <property type="entry name" value="Zn-binding ribosomal proteins"/>
    <property type="match status" value="1"/>
</dbReference>
<dbReference type="PROSITE" id="PS00582">
    <property type="entry name" value="RIBOSOMAL_L33"/>
    <property type="match status" value="1"/>
</dbReference>